<reference key="1">
    <citation type="journal article" date="1997" name="DNA Res.">
        <title>Construction of a contiguous 874-kb sequence of the Escherichia coli-K12 genome corresponding to 50.0-68.8 min on the linkage map and analysis of its sequence features.</title>
        <authorList>
            <person name="Yamamoto Y."/>
            <person name="Aiba H."/>
            <person name="Baba T."/>
            <person name="Hayashi K."/>
            <person name="Inada T."/>
            <person name="Isono K."/>
            <person name="Itoh T."/>
            <person name="Kimura S."/>
            <person name="Kitagawa M."/>
            <person name="Makino K."/>
            <person name="Miki T."/>
            <person name="Mitsuhashi N."/>
            <person name="Mizobuchi K."/>
            <person name="Mori H."/>
            <person name="Nakade S."/>
            <person name="Nakamura Y."/>
            <person name="Nashimoto H."/>
            <person name="Oshima T."/>
            <person name="Oyama S."/>
            <person name="Saito N."/>
            <person name="Sampei G."/>
            <person name="Satoh Y."/>
            <person name="Sivasundaram S."/>
            <person name="Tagami H."/>
            <person name="Takahashi H."/>
            <person name="Takeda J."/>
            <person name="Takemoto K."/>
            <person name="Uehara K."/>
            <person name="Wada C."/>
            <person name="Yamagata S."/>
            <person name="Horiuchi T."/>
        </authorList>
    </citation>
    <scope>NUCLEOTIDE SEQUENCE [LARGE SCALE GENOMIC DNA]</scope>
    <source>
        <strain>K12 / W3110 / ATCC 27325 / DSM 5911</strain>
    </source>
</reference>
<reference key="2">
    <citation type="journal article" date="1997" name="Science">
        <title>The complete genome sequence of Escherichia coli K-12.</title>
        <authorList>
            <person name="Blattner F.R."/>
            <person name="Plunkett G. III"/>
            <person name="Bloch C.A."/>
            <person name="Perna N.T."/>
            <person name="Burland V."/>
            <person name="Riley M."/>
            <person name="Collado-Vides J."/>
            <person name="Glasner J.D."/>
            <person name="Rode C.K."/>
            <person name="Mayhew G.F."/>
            <person name="Gregor J."/>
            <person name="Davis N.W."/>
            <person name="Kirkpatrick H.A."/>
            <person name="Goeden M.A."/>
            <person name="Rose D.J."/>
            <person name="Mau B."/>
            <person name="Shao Y."/>
        </authorList>
    </citation>
    <scope>NUCLEOTIDE SEQUENCE [LARGE SCALE GENOMIC DNA]</scope>
    <source>
        <strain>K12 / MG1655 / ATCC 47076</strain>
    </source>
</reference>
<reference key="3">
    <citation type="journal article" date="2006" name="Mol. Syst. Biol.">
        <title>Highly accurate genome sequences of Escherichia coli K-12 strains MG1655 and W3110.</title>
        <authorList>
            <person name="Hayashi K."/>
            <person name="Morooka N."/>
            <person name="Yamamoto Y."/>
            <person name="Fujita K."/>
            <person name="Isono K."/>
            <person name="Choi S."/>
            <person name="Ohtsubo E."/>
            <person name="Baba T."/>
            <person name="Wanner B.L."/>
            <person name="Mori H."/>
            <person name="Horiuchi T."/>
        </authorList>
    </citation>
    <scope>NUCLEOTIDE SEQUENCE [LARGE SCALE GENOMIC DNA]</scope>
    <source>
        <strain>K12 / W3110 / ATCC 27325 / DSM 5911</strain>
    </source>
</reference>
<reference key="4">
    <citation type="journal article" date="2008" name="Biochemistry">
        <title>Evolution of enzymatic activities in the enolase superfamily: L-rhamnonate dehydratase.</title>
        <authorList>
            <person name="Rakus J.F."/>
            <person name="Fedorov A.A."/>
            <person name="Fedorov E.V."/>
            <person name="Glasner M.E."/>
            <person name="Hubbard B.K."/>
            <person name="Delli J.D."/>
            <person name="Babbitt P.C."/>
            <person name="Almo S.C."/>
            <person name="Gerlt J.A."/>
        </authorList>
    </citation>
    <scope>X-RAY CRYSTALLOGRAPHY (2.1 ANGSTROMS)</scope>
    <scope>FUNCTION</scope>
    <scope>SUBSTRATE SPECIFICITY</scope>
    <scope>KINETIC PARAMETERS</scope>
    <scope>SUBUNIT</scope>
    <scope>CATALYTIC MECHANISM</scope>
    <scope>REACTION STEREOCHEMISTRY</scope>
    <scope>MUTAGENESIS OF HIS-29; HIS-277 AND HIS-325</scope>
    <scope>CATALYTIC ACTIVITY</scope>
    <source>
        <strain>K12 / MG1655 / ATCC 47076</strain>
    </source>
</reference>
<comment type="function">
    <text evidence="2">Catalyzes the dehydration of L-rhamnonate to 2-keto-3-deoxy-L-rhamnonate (KDR). Can also dehydrate L-lyxonate, L-mannonate and D-gulonate, although less efficiently, but not 2-keto-4-hydroxyheptane-1,7-dioate.</text>
</comment>
<comment type="catalytic activity">
    <reaction evidence="2">
        <text>L-rhamnonate = 2-dehydro-3-deoxy-L-rhamnonate + H2O</text>
        <dbReference type="Rhea" id="RHEA:23080"/>
        <dbReference type="ChEBI" id="CHEBI:15377"/>
        <dbReference type="ChEBI" id="CHEBI:58118"/>
        <dbReference type="ChEBI" id="CHEBI:58371"/>
        <dbReference type="EC" id="4.2.1.90"/>
    </reaction>
</comment>
<comment type="cofactor">
    <cofactor evidence="1">
        <name>Mg(2+)</name>
        <dbReference type="ChEBI" id="CHEBI:18420"/>
    </cofactor>
    <text evidence="1">Binds 1 Mg(2+) ion per subunit.</text>
</comment>
<comment type="biophysicochemical properties">
    <kinetics>
        <KM evidence="2">0.15 mM for L-rhamnonate</KM>
        <KM evidence="2">2 mM for L-lyxonate</KM>
        <KM evidence="2">0.15 mM for L-mannonate</KM>
        <text evidence="2">The catalytic efficiency observed with L-rhamnonate as substrate is 70- and 16-fold higher than that observed with L-lyxonate and L-mannonate, respectively.</text>
    </kinetics>
</comment>
<comment type="subunit">
    <text evidence="2">Homooctamer; tetramer of dimers.</text>
</comment>
<comment type="miscellaneous">
    <text>Reaction proceeds via a syn dehydration.</text>
</comment>
<comment type="similarity">
    <text evidence="3">Belongs to the mandelate racemase/muconate lactonizing enzyme family. RhamD subfamily.</text>
</comment>
<comment type="sequence caution" evidence="3">
    <conflict type="erroneous initiation">
        <sequence resource="EMBL-CDS" id="BAA16071"/>
    </conflict>
</comment>
<accession>P77215</accession>
<gene>
    <name type="primary">rhmD</name>
    <name type="synonym">yfaW</name>
    <name type="ordered locus">b2247</name>
    <name type="ordered locus">JW2241</name>
</gene>
<proteinExistence type="evidence at protein level"/>
<evidence type="ECO:0000250" key="1"/>
<evidence type="ECO:0000269" key="2">
    <source>
    </source>
</evidence>
<evidence type="ECO:0000305" key="3"/>
<evidence type="ECO:0007829" key="4">
    <source>
        <dbReference type="PDB" id="2I5Q"/>
    </source>
</evidence>
<name>RHMD_ECOLI</name>
<feature type="chain" id="PRO_0000171262" description="L-rhamnonate dehydratase">
    <location>
        <begin position="1"/>
        <end position="401"/>
    </location>
</feature>
<feature type="active site" description="Proton acceptor">
    <location>
        <position position="325"/>
    </location>
</feature>
<feature type="binding site">
    <location>
        <position position="29"/>
    </location>
    <ligand>
        <name>substrate</name>
    </ligand>
</feature>
<feature type="binding site" evidence="1">
    <location>
        <position position="55"/>
    </location>
    <ligand>
        <name>substrate</name>
    </ligand>
</feature>
<feature type="binding site" evidence="1">
    <location>
        <position position="222"/>
    </location>
    <ligand>
        <name>Mg(2+)</name>
        <dbReference type="ChEBI" id="CHEBI:18420"/>
    </ligand>
</feature>
<feature type="binding site" evidence="1">
    <location>
        <position position="248"/>
    </location>
    <ligand>
        <name>Mg(2+)</name>
        <dbReference type="ChEBI" id="CHEBI:18420"/>
    </ligand>
</feature>
<feature type="binding site" evidence="1">
    <location>
        <position position="276"/>
    </location>
    <ligand>
        <name>Mg(2+)</name>
        <dbReference type="ChEBI" id="CHEBI:18420"/>
    </ligand>
</feature>
<feature type="binding site" evidence="1">
    <location>
        <position position="345"/>
    </location>
    <ligand>
        <name>substrate</name>
    </ligand>
</feature>
<feature type="site" description="Increases basicity of active site His" evidence="1">
    <location>
        <position position="298"/>
    </location>
</feature>
<feature type="site" description="Transition state stabilizer" evidence="1">
    <location>
        <position position="345"/>
    </location>
</feature>
<feature type="mutagenesis site" description="Loss of L-rhamnonate dehydratase activity due to absence of substrate binding." evidence="2">
    <original>H</original>
    <variation>N</variation>
    <location>
        <position position="29"/>
    </location>
</feature>
<feature type="mutagenesis site" description="35-fold decrease in L-rhamnonate dehydratase activity. 59-fold decrease in substrate affinity." evidence="2">
    <original>H</original>
    <variation>N</variation>
    <location>
        <position position="277"/>
    </location>
</feature>
<feature type="mutagenesis site" description="Loss of L-rhamnonate dehydratase activity. 2-fold decrease in substrate affinity." evidence="2">
    <original>H</original>
    <variation>N</variation>
    <location>
        <position position="325"/>
    </location>
</feature>
<feature type="strand" evidence="4">
    <location>
        <begin position="5"/>
        <end position="16"/>
    </location>
</feature>
<feature type="turn" evidence="4">
    <location>
        <begin position="44"/>
        <end position="47"/>
    </location>
</feature>
<feature type="turn" evidence="4">
    <location>
        <begin position="49"/>
        <end position="51"/>
    </location>
</feature>
<feature type="strand" evidence="4">
    <location>
        <begin position="65"/>
        <end position="72"/>
    </location>
</feature>
<feature type="strand" evidence="4">
    <location>
        <begin position="77"/>
        <end position="83"/>
    </location>
</feature>
<feature type="helix" evidence="4">
    <location>
        <begin position="85"/>
        <end position="94"/>
    </location>
</feature>
<feature type="helix" evidence="4">
    <location>
        <begin position="97"/>
        <end position="100"/>
    </location>
</feature>
<feature type="helix" evidence="4">
    <location>
        <begin position="108"/>
        <end position="118"/>
    </location>
</feature>
<feature type="helix" evidence="4">
    <location>
        <begin position="120"/>
        <end position="123"/>
    </location>
</feature>
<feature type="helix" evidence="4">
    <location>
        <begin position="127"/>
        <end position="148"/>
    </location>
</feature>
<feature type="helix" evidence="4">
    <location>
        <begin position="152"/>
        <end position="155"/>
    </location>
</feature>
<feature type="strand" evidence="4">
    <location>
        <begin position="160"/>
        <end position="171"/>
    </location>
</feature>
<feature type="helix" evidence="4">
    <location>
        <begin position="173"/>
        <end position="178"/>
    </location>
</feature>
<feature type="strand" evidence="4">
    <location>
        <begin position="182"/>
        <end position="187"/>
    </location>
</feature>
<feature type="helix" evidence="4">
    <location>
        <begin position="192"/>
        <end position="194"/>
    </location>
</feature>
<feature type="helix" evidence="4">
    <location>
        <begin position="195"/>
        <end position="213"/>
    </location>
</feature>
<feature type="strand" evidence="4">
    <location>
        <begin position="215"/>
        <end position="222"/>
    </location>
</feature>
<feature type="helix" evidence="4">
    <location>
        <begin position="229"/>
        <end position="239"/>
    </location>
</feature>
<feature type="helix" evidence="4">
    <location>
        <begin position="240"/>
        <end position="242"/>
    </location>
</feature>
<feature type="strand" evidence="4">
    <location>
        <begin position="246"/>
        <end position="248"/>
    </location>
</feature>
<feature type="helix" evidence="4">
    <location>
        <begin position="256"/>
        <end position="265"/>
    </location>
</feature>
<feature type="strand" evidence="4">
    <location>
        <begin position="271"/>
        <end position="274"/>
    </location>
</feature>
<feature type="helix" evidence="4">
    <location>
        <begin position="281"/>
        <end position="288"/>
    </location>
</feature>
<feature type="turn" evidence="4">
    <location>
        <begin position="289"/>
        <end position="291"/>
    </location>
</feature>
<feature type="strand" evidence="4">
    <location>
        <begin position="293"/>
        <end position="295"/>
    </location>
</feature>
<feature type="turn" evidence="4">
    <location>
        <begin position="299"/>
        <end position="303"/>
    </location>
</feature>
<feature type="helix" evidence="4">
    <location>
        <begin position="305"/>
        <end position="317"/>
    </location>
</feature>
<feature type="helix" evidence="4">
    <location>
        <begin position="329"/>
        <end position="335"/>
    </location>
</feature>
<feature type="strand" evidence="4">
    <location>
        <begin position="344"/>
        <end position="347"/>
    </location>
</feature>
<feature type="strand" evidence="4">
    <location>
        <begin position="350"/>
        <end position="353"/>
    </location>
</feature>
<feature type="turn" evidence="4">
    <location>
        <begin position="359"/>
        <end position="363"/>
    </location>
</feature>
<feature type="strand" evidence="4">
    <location>
        <begin position="364"/>
        <end position="366"/>
    </location>
</feature>
<feature type="strand" evidence="4">
    <location>
        <begin position="374"/>
        <end position="376"/>
    </location>
</feature>
<feature type="helix" evidence="4">
    <location>
        <begin position="377"/>
        <end position="380"/>
    </location>
</feature>
<feature type="strand" evidence="4">
    <location>
        <begin position="382"/>
        <end position="384"/>
    </location>
</feature>
<dbReference type="EC" id="4.2.1.90" evidence="2"/>
<dbReference type="EMBL" id="U00096">
    <property type="protein sequence ID" value="AAC75307.2"/>
    <property type="molecule type" value="Genomic_DNA"/>
</dbReference>
<dbReference type="EMBL" id="AP009048">
    <property type="protein sequence ID" value="BAA16071.1"/>
    <property type="status" value="ALT_INIT"/>
    <property type="molecule type" value="Genomic_DNA"/>
</dbReference>
<dbReference type="PIR" id="E64995">
    <property type="entry name" value="E64995"/>
</dbReference>
<dbReference type="RefSeq" id="NP_416750.2">
    <property type="nucleotide sequence ID" value="NC_000913.3"/>
</dbReference>
<dbReference type="RefSeq" id="WP_001319848.1">
    <property type="nucleotide sequence ID" value="NZ_LN832404.1"/>
</dbReference>
<dbReference type="PDB" id="2I5Q">
    <property type="method" value="X-ray"/>
    <property type="resolution" value="2.10 A"/>
    <property type="chains" value="A/B=1-401"/>
</dbReference>
<dbReference type="PDBsum" id="2I5Q"/>
<dbReference type="SMR" id="P77215"/>
<dbReference type="BioGRID" id="4261221">
    <property type="interactions" value="153"/>
</dbReference>
<dbReference type="DIP" id="DIP-11955N"/>
<dbReference type="FunCoup" id="P77215">
    <property type="interactions" value="168"/>
</dbReference>
<dbReference type="IntAct" id="P77215">
    <property type="interactions" value="11"/>
</dbReference>
<dbReference type="STRING" id="511145.b2247"/>
<dbReference type="jPOST" id="P77215"/>
<dbReference type="PaxDb" id="511145-b2247"/>
<dbReference type="EnsemblBacteria" id="AAC75307">
    <property type="protein sequence ID" value="AAC75307"/>
    <property type="gene ID" value="b2247"/>
</dbReference>
<dbReference type="GeneID" id="945881"/>
<dbReference type="KEGG" id="ecj:JW2241"/>
<dbReference type="KEGG" id="eco:b2247"/>
<dbReference type="KEGG" id="ecoc:C3026_12555"/>
<dbReference type="PATRIC" id="fig|511145.12.peg.2338"/>
<dbReference type="EchoBASE" id="EB3838"/>
<dbReference type="eggNOG" id="COG4948">
    <property type="taxonomic scope" value="Bacteria"/>
</dbReference>
<dbReference type="HOGENOM" id="CLU_030273_1_0_6"/>
<dbReference type="InParanoid" id="P77215"/>
<dbReference type="OrthoDB" id="103536at2"/>
<dbReference type="PhylomeDB" id="P77215"/>
<dbReference type="BioCyc" id="EcoCyc:G7160-MONOMER"/>
<dbReference type="BioCyc" id="MetaCyc:G7160-MONOMER"/>
<dbReference type="BRENDA" id="4.2.1.90">
    <property type="organism ID" value="2165"/>
</dbReference>
<dbReference type="EvolutionaryTrace" id="P77215"/>
<dbReference type="PRO" id="PR:P77215"/>
<dbReference type="Proteomes" id="UP000000625">
    <property type="component" value="Chromosome"/>
</dbReference>
<dbReference type="GO" id="GO:0016836">
    <property type="term" value="F:hydro-lyase activity"/>
    <property type="evidence" value="ECO:0000318"/>
    <property type="project" value="GO_Central"/>
</dbReference>
<dbReference type="GO" id="GO:0042802">
    <property type="term" value="F:identical protein binding"/>
    <property type="evidence" value="ECO:0000314"/>
    <property type="project" value="EcoCyc"/>
</dbReference>
<dbReference type="GO" id="GO:0050032">
    <property type="term" value="F:L-rhamnonate dehydratase activity"/>
    <property type="evidence" value="ECO:0000314"/>
    <property type="project" value="EcoCyc"/>
</dbReference>
<dbReference type="GO" id="GO:0000287">
    <property type="term" value="F:magnesium ion binding"/>
    <property type="evidence" value="ECO:0000318"/>
    <property type="project" value="GO_Central"/>
</dbReference>
<dbReference type="GO" id="GO:0009063">
    <property type="term" value="P:amino acid catabolic process"/>
    <property type="evidence" value="ECO:0007669"/>
    <property type="project" value="InterPro"/>
</dbReference>
<dbReference type="GO" id="GO:0016052">
    <property type="term" value="P:carbohydrate catabolic process"/>
    <property type="evidence" value="ECO:0000318"/>
    <property type="project" value="GO_Central"/>
</dbReference>
<dbReference type="CDD" id="cd03327">
    <property type="entry name" value="MR_like_2"/>
    <property type="match status" value="1"/>
</dbReference>
<dbReference type="FunFam" id="3.30.390.10:FF:000007">
    <property type="entry name" value="L-rhamnonate dehydratase"/>
    <property type="match status" value="1"/>
</dbReference>
<dbReference type="FunFam" id="3.20.20.120:FF:000005">
    <property type="entry name" value="Putative L-rhamnonate dehydratase"/>
    <property type="match status" value="1"/>
</dbReference>
<dbReference type="Gene3D" id="3.20.20.120">
    <property type="entry name" value="Enolase-like C-terminal domain"/>
    <property type="match status" value="1"/>
</dbReference>
<dbReference type="Gene3D" id="3.30.390.10">
    <property type="entry name" value="Enolase-like, N-terminal domain"/>
    <property type="match status" value="1"/>
</dbReference>
<dbReference type="HAMAP" id="MF_01288">
    <property type="entry name" value="Rhamnon_dehydrat"/>
    <property type="match status" value="1"/>
</dbReference>
<dbReference type="InterPro" id="IPR036849">
    <property type="entry name" value="Enolase-like_C_sf"/>
</dbReference>
<dbReference type="InterPro" id="IPR029017">
    <property type="entry name" value="Enolase-like_N"/>
</dbReference>
<dbReference type="InterPro" id="IPR029065">
    <property type="entry name" value="Enolase_C-like"/>
</dbReference>
<dbReference type="InterPro" id="IPR023444">
    <property type="entry name" value="L-Rhamnon_dehydrat"/>
</dbReference>
<dbReference type="InterPro" id="IPR018110">
    <property type="entry name" value="Mandel_Rmase/mucon_lact_enz_CS"/>
</dbReference>
<dbReference type="InterPro" id="IPR013342">
    <property type="entry name" value="Mandelate_racemase_C"/>
</dbReference>
<dbReference type="InterPro" id="IPR013341">
    <property type="entry name" value="Mandelate_racemase_N_dom"/>
</dbReference>
<dbReference type="InterPro" id="IPR046945">
    <property type="entry name" value="RHMD-like"/>
</dbReference>
<dbReference type="NCBIfam" id="NF011968">
    <property type="entry name" value="PRK15440.1"/>
    <property type="match status" value="1"/>
</dbReference>
<dbReference type="PANTHER" id="PTHR13794">
    <property type="entry name" value="ENOLASE SUPERFAMILY, MANDELATE RACEMASE"/>
    <property type="match status" value="1"/>
</dbReference>
<dbReference type="PANTHER" id="PTHR13794:SF58">
    <property type="entry name" value="MITOCHONDRIAL ENOLASE SUPERFAMILY MEMBER 1"/>
    <property type="match status" value="1"/>
</dbReference>
<dbReference type="Pfam" id="PF13378">
    <property type="entry name" value="MR_MLE_C"/>
    <property type="match status" value="1"/>
</dbReference>
<dbReference type="Pfam" id="PF02746">
    <property type="entry name" value="MR_MLE_N"/>
    <property type="match status" value="1"/>
</dbReference>
<dbReference type="SFLD" id="SFLDG00179">
    <property type="entry name" value="mandelate_racemase"/>
    <property type="match status" value="1"/>
</dbReference>
<dbReference type="SFLD" id="SFLDF00006">
    <property type="entry name" value="rhamnonate_dehydratase"/>
    <property type="match status" value="1"/>
</dbReference>
<dbReference type="SMART" id="SM00922">
    <property type="entry name" value="MR_MLE"/>
    <property type="match status" value="1"/>
</dbReference>
<dbReference type="SUPFAM" id="SSF51604">
    <property type="entry name" value="Enolase C-terminal domain-like"/>
    <property type="match status" value="1"/>
</dbReference>
<dbReference type="SUPFAM" id="SSF54826">
    <property type="entry name" value="Enolase N-terminal domain-like"/>
    <property type="match status" value="1"/>
</dbReference>
<dbReference type="PROSITE" id="PS00908">
    <property type="entry name" value="MR_MLE_1"/>
    <property type="match status" value="1"/>
</dbReference>
<sequence length="401" mass="44226">MTLPKIKQVRAWFTGGATAEKGAGGGDYHDQGANHWIDDHIATPMSKYRDYEQSRQSFGINVLGTLVVEVEAENGQTGFAVSTAGEMGCFIVEKHLNRFIEGKCVSDIKLIHDQMLSATLYYSGSGGLVMNTISCVDLALWDLFGKVVGLPVYKLLGGAVRDEIQFYATGARPDLAKEMGFIGGKMPTHWGPHDGDAGIRKDAAMVADMREKCGEDFWLMLDCWMSQDVNYATKLAHACAPYNLKWIEECLPPQQYESYRELKRNAPVGMMVTSGEHHGTLQSFRTLSETGIDIMQPDVGWCGGLTTLVEIAAIAKSRGQLVVPHGSSVYSHHAVITFTNTPFSEFLMTSPDCSTMRPQFDPILLNEPVPVNGRIHKSVLDKPGFGVELNRDCNLKRPYSH</sequence>
<protein>
    <recommendedName>
        <fullName>L-rhamnonate dehydratase</fullName>
        <shortName>RhamD</shortName>
        <ecNumber evidence="2">4.2.1.90</ecNumber>
    </recommendedName>
</protein>
<organism>
    <name type="scientific">Escherichia coli (strain K12)</name>
    <dbReference type="NCBI Taxonomy" id="83333"/>
    <lineage>
        <taxon>Bacteria</taxon>
        <taxon>Pseudomonadati</taxon>
        <taxon>Pseudomonadota</taxon>
        <taxon>Gammaproteobacteria</taxon>
        <taxon>Enterobacterales</taxon>
        <taxon>Enterobacteriaceae</taxon>
        <taxon>Escherichia</taxon>
    </lineage>
</organism>
<keyword id="KW-0002">3D-structure</keyword>
<keyword id="KW-0456">Lyase</keyword>
<keyword id="KW-0460">Magnesium</keyword>
<keyword id="KW-0479">Metal-binding</keyword>
<keyword id="KW-1185">Reference proteome</keyword>